<evidence type="ECO:0000250" key="1"/>
<evidence type="ECO:0000250" key="2">
    <source>
        <dbReference type="UniProtKB" id="P14531"/>
    </source>
</evidence>
<evidence type="ECO:0000255" key="3"/>
<evidence type="ECO:0000303" key="4">
    <source>
    </source>
</evidence>
<evidence type="ECO:0000303" key="5">
    <source>
    </source>
</evidence>
<evidence type="ECO:0000305" key="6"/>
<accession>P49127</accession>
<name>TXCL2_CALPA</name>
<sequence>MKTQVLAVFVLCVLFCLAESRTTLNKRIDIAKRIECKCKGDAPDLSHMTGTVYFSCKGGDGSWSKCNTYTAVADCCHQA</sequence>
<comment type="function">
    <text evidence="2">In neuromuscular preparation of crustaceans, the toxin increased neurotransmitter release, causing repetitive firing of the axons. May affect sodium channels (Nav).</text>
</comment>
<comment type="subcellular location">
    <subcellularLocation>
        <location evidence="6">Secreted</location>
    </subcellularLocation>
    <subcellularLocation>
        <location evidence="6">Nematocyst</location>
    </subcellularLocation>
</comment>
<comment type="similarity">
    <text evidence="6">Belongs to the sea anemone sodium channel inhibitory toxin family.</text>
</comment>
<organism>
    <name type="scientific">Calliactis parasitica</name>
    <name type="common">Sea anemone</name>
    <name type="synonym">Actinia parasitica</name>
    <dbReference type="NCBI Taxonomy" id="6114"/>
    <lineage>
        <taxon>Eukaryota</taxon>
        <taxon>Metazoa</taxon>
        <taxon>Cnidaria</taxon>
        <taxon>Anthozoa</taxon>
        <taxon>Hexacorallia</taxon>
        <taxon>Actiniaria</taxon>
        <taxon>Nynantheae</taxon>
        <taxon>Hormathiidae</taxon>
        <taxon>Calliactis</taxon>
    </lineage>
</organism>
<protein>
    <recommendedName>
        <fullName evidence="4">Delta-hormotoxin-Cpt1a</fullName>
        <shortName evidence="4">Delta-HRTX-Cpt1a</shortName>
    </recommendedName>
    <alternativeName>
        <fullName evidence="5">Calitoxin-2</fullName>
        <shortName evidence="5">CLX-2</shortName>
    </alternativeName>
</protein>
<proteinExistence type="inferred from homology"/>
<keyword id="KW-0165">Cleavage on pair of basic residues</keyword>
<keyword id="KW-1015">Disulfide bond</keyword>
<keyword id="KW-0872">Ion channel impairing toxin</keyword>
<keyword id="KW-0166">Nematocyst</keyword>
<keyword id="KW-0528">Neurotoxin</keyword>
<keyword id="KW-0964">Secreted</keyword>
<keyword id="KW-0732">Signal</keyword>
<keyword id="KW-0800">Toxin</keyword>
<keyword id="KW-0738">Voltage-gated sodium channel impairing toxin</keyword>
<dbReference type="EMBL" id="S69399">
    <property type="protein sequence ID" value="AAD14039.1"/>
    <property type="molecule type" value="Genomic_DNA"/>
</dbReference>
<dbReference type="GO" id="GO:0005576">
    <property type="term" value="C:extracellular region"/>
    <property type="evidence" value="ECO:0007669"/>
    <property type="project" value="UniProtKB-SubCell"/>
</dbReference>
<dbReference type="GO" id="GO:0042151">
    <property type="term" value="C:nematocyst"/>
    <property type="evidence" value="ECO:0007669"/>
    <property type="project" value="UniProtKB-SubCell"/>
</dbReference>
<dbReference type="GO" id="GO:0017080">
    <property type="term" value="F:sodium channel regulator activity"/>
    <property type="evidence" value="ECO:0007669"/>
    <property type="project" value="UniProtKB-KW"/>
</dbReference>
<dbReference type="GO" id="GO:0090729">
    <property type="term" value="F:toxin activity"/>
    <property type="evidence" value="ECO:0007669"/>
    <property type="project" value="UniProtKB-KW"/>
</dbReference>
<dbReference type="Gene3D" id="2.20.20.10">
    <property type="entry name" value="Anthopleurin-A"/>
    <property type="match status" value="1"/>
</dbReference>
<dbReference type="InterPro" id="IPR023355">
    <property type="entry name" value="Myo_ane_neurotoxin_sf"/>
</dbReference>
<dbReference type="Pfam" id="PF00706">
    <property type="entry name" value="Toxin_4"/>
    <property type="match status" value="1"/>
</dbReference>
<dbReference type="SUPFAM" id="SSF57392">
    <property type="entry name" value="Defensin-like"/>
    <property type="match status" value="1"/>
</dbReference>
<reference key="1">
    <citation type="journal article" date="1994" name="Gene">
        <title>Isolation and characterization of two genes encoding calitoxins, neurotoxic peptides from Calliactis parasitica (Cnidaria).</title>
        <authorList>
            <person name="Spagnuolo A."/>
            <person name="Zanetti L."/>
            <person name="Cariello L."/>
            <person name="Piccoli R."/>
        </authorList>
    </citation>
    <scope>NUCLEOTIDE SEQUENCE [GENOMIC DNA]</scope>
</reference>
<reference key="2">
    <citation type="journal article" date="2012" name="Toxicon">
        <title>Development of a rational nomenclature for naming peptide and protein toxins from sea anemones.</title>
        <authorList>
            <person name="Oliveira J.S."/>
            <person name="Fuentes-Silva D."/>
            <person name="King G.F."/>
        </authorList>
    </citation>
    <scope>NOMENCLATURE</scope>
</reference>
<feature type="signal peptide" evidence="3">
    <location>
        <begin position="1"/>
        <end position="20"/>
    </location>
</feature>
<feature type="propeptide" id="PRO_0000034865" evidence="2">
    <location>
        <begin position="21"/>
        <end position="31"/>
    </location>
</feature>
<feature type="chain" id="PRO_0000034866" description="Delta-hormotoxin-Cpt1a">
    <location>
        <begin position="34"/>
        <end position="79"/>
    </location>
</feature>
<feature type="disulfide bond" evidence="1">
    <location>
        <begin position="36"/>
        <end position="75"/>
    </location>
</feature>
<feature type="disulfide bond" evidence="1">
    <location>
        <begin position="38"/>
        <end position="66"/>
    </location>
</feature>
<feature type="disulfide bond" evidence="1">
    <location>
        <begin position="56"/>
        <end position="76"/>
    </location>
</feature>